<feature type="chain" id="PRO_1000015432" description="Large-conductance mechanosensitive channel">
    <location>
        <begin position="1"/>
        <end position="120"/>
    </location>
</feature>
<feature type="transmembrane region" description="Helical" evidence="1">
    <location>
        <begin position="7"/>
        <end position="27"/>
    </location>
</feature>
<feature type="transmembrane region" description="Helical" evidence="1">
    <location>
        <begin position="64"/>
        <end position="84"/>
    </location>
</feature>
<gene>
    <name evidence="1" type="primary">mscL</name>
    <name type="ordered locus">SAHV_1336</name>
</gene>
<organism>
    <name type="scientific">Staphylococcus aureus (strain Mu3 / ATCC 700698)</name>
    <dbReference type="NCBI Taxonomy" id="418127"/>
    <lineage>
        <taxon>Bacteria</taxon>
        <taxon>Bacillati</taxon>
        <taxon>Bacillota</taxon>
        <taxon>Bacilli</taxon>
        <taxon>Bacillales</taxon>
        <taxon>Staphylococcaceae</taxon>
        <taxon>Staphylococcus</taxon>
    </lineage>
</organism>
<accession>A7X204</accession>
<name>MSCL_STAA1</name>
<comment type="function">
    <text evidence="1">Channel that opens in response to stretch forces in the membrane lipid bilayer. May participate in the regulation of osmotic pressure changes within the cell.</text>
</comment>
<comment type="subunit">
    <text evidence="1">Homopentamer.</text>
</comment>
<comment type="subcellular location">
    <subcellularLocation>
        <location evidence="1">Cell membrane</location>
        <topology evidence="1">Multi-pass membrane protein</topology>
    </subcellularLocation>
</comment>
<comment type="similarity">
    <text evidence="1">Belongs to the MscL family.</text>
</comment>
<dbReference type="EMBL" id="AP009324">
    <property type="protein sequence ID" value="BAF78219.1"/>
    <property type="molecule type" value="Genomic_DNA"/>
</dbReference>
<dbReference type="RefSeq" id="WP_000910489.1">
    <property type="nucleotide sequence ID" value="NZ_CTYB01000021.1"/>
</dbReference>
<dbReference type="SMR" id="A7X204"/>
<dbReference type="KEGG" id="saw:SAHV_1336"/>
<dbReference type="HOGENOM" id="CLU_095787_0_0_9"/>
<dbReference type="GO" id="GO:0005886">
    <property type="term" value="C:plasma membrane"/>
    <property type="evidence" value="ECO:0007669"/>
    <property type="project" value="UniProtKB-SubCell"/>
</dbReference>
<dbReference type="GO" id="GO:0008381">
    <property type="term" value="F:mechanosensitive monoatomic ion channel activity"/>
    <property type="evidence" value="ECO:0007669"/>
    <property type="project" value="UniProtKB-UniRule"/>
</dbReference>
<dbReference type="FunFam" id="1.10.1200.120:FF:000002">
    <property type="entry name" value="Large-conductance mechanosensitive channel"/>
    <property type="match status" value="1"/>
</dbReference>
<dbReference type="Gene3D" id="1.10.1200.120">
    <property type="entry name" value="Large-conductance mechanosensitive channel, MscL, domain 1"/>
    <property type="match status" value="1"/>
</dbReference>
<dbReference type="HAMAP" id="MF_00115">
    <property type="entry name" value="MscL"/>
    <property type="match status" value="1"/>
</dbReference>
<dbReference type="InterPro" id="IPR019823">
    <property type="entry name" value="Mechanosensitive_channel_CS"/>
</dbReference>
<dbReference type="InterPro" id="IPR001185">
    <property type="entry name" value="MS_channel"/>
</dbReference>
<dbReference type="InterPro" id="IPR037673">
    <property type="entry name" value="MSC/AndL"/>
</dbReference>
<dbReference type="InterPro" id="IPR036019">
    <property type="entry name" value="MscL_channel"/>
</dbReference>
<dbReference type="NCBIfam" id="TIGR00220">
    <property type="entry name" value="mscL"/>
    <property type="match status" value="1"/>
</dbReference>
<dbReference type="NCBIfam" id="NF010559">
    <property type="entry name" value="PRK13954.1"/>
    <property type="match status" value="1"/>
</dbReference>
<dbReference type="PANTHER" id="PTHR30266:SF2">
    <property type="entry name" value="LARGE-CONDUCTANCE MECHANOSENSITIVE CHANNEL"/>
    <property type="match status" value="1"/>
</dbReference>
<dbReference type="PANTHER" id="PTHR30266">
    <property type="entry name" value="MECHANOSENSITIVE CHANNEL MSCL"/>
    <property type="match status" value="1"/>
</dbReference>
<dbReference type="Pfam" id="PF01741">
    <property type="entry name" value="MscL"/>
    <property type="match status" value="1"/>
</dbReference>
<dbReference type="PRINTS" id="PR01264">
    <property type="entry name" value="MECHCHANNEL"/>
</dbReference>
<dbReference type="SUPFAM" id="SSF81330">
    <property type="entry name" value="Gated mechanosensitive channel"/>
    <property type="match status" value="1"/>
</dbReference>
<dbReference type="PROSITE" id="PS01327">
    <property type="entry name" value="MSCL"/>
    <property type="match status" value="1"/>
</dbReference>
<evidence type="ECO:0000255" key="1">
    <source>
        <dbReference type="HAMAP-Rule" id="MF_00115"/>
    </source>
</evidence>
<sequence length="120" mass="13616">MLKEFKEFALKGNVLDLAIAVVMGAAFNKIISSLVENIIMPLIGKIFGSVDFAKEWSFWGIKYGLFIQSVIDFIIIAFALFIFVKIANTLMKKEEAEEEAVVEENVVLLTEIRDLLREKK</sequence>
<protein>
    <recommendedName>
        <fullName evidence="1">Large-conductance mechanosensitive channel</fullName>
    </recommendedName>
</protein>
<keyword id="KW-1003">Cell membrane</keyword>
<keyword id="KW-0407">Ion channel</keyword>
<keyword id="KW-0406">Ion transport</keyword>
<keyword id="KW-0472">Membrane</keyword>
<keyword id="KW-0812">Transmembrane</keyword>
<keyword id="KW-1133">Transmembrane helix</keyword>
<keyword id="KW-0813">Transport</keyword>
<reference key="1">
    <citation type="journal article" date="2008" name="Antimicrob. Agents Chemother.">
        <title>Mutated response regulator graR is responsible for phenotypic conversion of Staphylococcus aureus from heterogeneous vancomycin-intermediate resistance to vancomycin-intermediate resistance.</title>
        <authorList>
            <person name="Neoh H.-M."/>
            <person name="Cui L."/>
            <person name="Yuzawa H."/>
            <person name="Takeuchi F."/>
            <person name="Matsuo M."/>
            <person name="Hiramatsu K."/>
        </authorList>
    </citation>
    <scope>NUCLEOTIDE SEQUENCE [LARGE SCALE GENOMIC DNA]</scope>
    <source>
        <strain>Mu3 / ATCC 700698</strain>
    </source>
</reference>
<proteinExistence type="inferred from homology"/>